<feature type="chain" id="PRO_1000122437" description="Homoserine kinase">
    <location>
        <begin position="1"/>
        <end position="309"/>
    </location>
</feature>
<feature type="binding site" evidence="1">
    <location>
        <begin position="91"/>
        <end position="101"/>
    </location>
    <ligand>
        <name>ATP</name>
        <dbReference type="ChEBI" id="CHEBI:30616"/>
    </ligand>
</feature>
<keyword id="KW-0028">Amino-acid biosynthesis</keyword>
<keyword id="KW-0067">ATP-binding</keyword>
<keyword id="KW-0963">Cytoplasm</keyword>
<keyword id="KW-0418">Kinase</keyword>
<keyword id="KW-0547">Nucleotide-binding</keyword>
<keyword id="KW-0791">Threonine biosynthesis</keyword>
<keyword id="KW-0808">Transferase</keyword>
<name>KHSE_SALDC</name>
<proteinExistence type="inferred from homology"/>
<protein>
    <recommendedName>
        <fullName evidence="1">Homoserine kinase</fullName>
        <shortName evidence="1">HK</shortName>
        <shortName evidence="1">HSK</shortName>
        <ecNumber evidence="1">2.7.1.39</ecNumber>
    </recommendedName>
</protein>
<reference key="1">
    <citation type="journal article" date="2011" name="J. Bacteriol.">
        <title>Comparative genomics of 28 Salmonella enterica isolates: evidence for CRISPR-mediated adaptive sublineage evolution.</title>
        <authorList>
            <person name="Fricke W.F."/>
            <person name="Mammel M.K."/>
            <person name="McDermott P.F."/>
            <person name="Tartera C."/>
            <person name="White D.G."/>
            <person name="Leclerc J.E."/>
            <person name="Ravel J."/>
            <person name="Cebula T.A."/>
        </authorList>
    </citation>
    <scope>NUCLEOTIDE SEQUENCE [LARGE SCALE GENOMIC DNA]</scope>
    <source>
        <strain>CT_02021853</strain>
    </source>
</reference>
<sequence length="309" mass="33285">MVKVYAPASSANMSVGFDVLGAAVTPVDGTLLGDVVSVEAANHFRLHNLGRFADKLPPEPRENIVYQCWERFCQALGKTIPVAMTLEKNMPIGSGLGSSACSVVAALVAMNEHCGKPLNDTRLLALMGELEGRISGSIHYDNVAPCFLGGMQLMIEENGIISQQVPGFDEWLWVLAYPGIKVSTAEARAILPAQYRRQDCIAHGRHLAGFIHACYSRQPQLAAALMKDVIAEPYRARLLPGFSQARQAVSEIGALASGISGSGPTLFALCDKPETAQRVADWLSKHYLQNQEGFVHICRLDTAGARVVG</sequence>
<evidence type="ECO:0000255" key="1">
    <source>
        <dbReference type="HAMAP-Rule" id="MF_00384"/>
    </source>
</evidence>
<comment type="function">
    <text evidence="1">Catalyzes the ATP-dependent phosphorylation of L-homoserine to L-homoserine phosphate.</text>
</comment>
<comment type="catalytic activity">
    <reaction evidence="1">
        <text>L-homoserine + ATP = O-phospho-L-homoserine + ADP + H(+)</text>
        <dbReference type="Rhea" id="RHEA:13985"/>
        <dbReference type="ChEBI" id="CHEBI:15378"/>
        <dbReference type="ChEBI" id="CHEBI:30616"/>
        <dbReference type="ChEBI" id="CHEBI:57476"/>
        <dbReference type="ChEBI" id="CHEBI:57590"/>
        <dbReference type="ChEBI" id="CHEBI:456216"/>
        <dbReference type="EC" id="2.7.1.39"/>
    </reaction>
</comment>
<comment type="pathway">
    <text evidence="1">Amino-acid biosynthesis; L-threonine biosynthesis; L-threonine from L-aspartate: step 4/5.</text>
</comment>
<comment type="subcellular location">
    <subcellularLocation>
        <location evidence="1">Cytoplasm</location>
    </subcellularLocation>
</comment>
<comment type="similarity">
    <text evidence="1">Belongs to the GHMP kinase family. Homoserine kinase subfamily.</text>
</comment>
<gene>
    <name evidence="1" type="primary">thrB</name>
    <name type="ordered locus">SeD_A0003</name>
</gene>
<accession>B5FH97</accession>
<dbReference type="EC" id="2.7.1.39" evidence="1"/>
<dbReference type="EMBL" id="CP001144">
    <property type="protein sequence ID" value="ACH76699.1"/>
    <property type="molecule type" value="Genomic_DNA"/>
</dbReference>
<dbReference type="RefSeq" id="WP_000241691.1">
    <property type="nucleotide sequence ID" value="NC_011205.1"/>
</dbReference>
<dbReference type="SMR" id="B5FH97"/>
<dbReference type="KEGG" id="sed:SeD_A0003"/>
<dbReference type="HOGENOM" id="CLU_041243_1_1_6"/>
<dbReference type="UniPathway" id="UPA00050">
    <property type="reaction ID" value="UER00064"/>
</dbReference>
<dbReference type="Proteomes" id="UP000008322">
    <property type="component" value="Chromosome"/>
</dbReference>
<dbReference type="GO" id="GO:0005737">
    <property type="term" value="C:cytoplasm"/>
    <property type="evidence" value="ECO:0007669"/>
    <property type="project" value="UniProtKB-SubCell"/>
</dbReference>
<dbReference type="GO" id="GO:0005524">
    <property type="term" value="F:ATP binding"/>
    <property type="evidence" value="ECO:0007669"/>
    <property type="project" value="UniProtKB-UniRule"/>
</dbReference>
<dbReference type="GO" id="GO:0004413">
    <property type="term" value="F:homoserine kinase activity"/>
    <property type="evidence" value="ECO:0007669"/>
    <property type="project" value="UniProtKB-UniRule"/>
</dbReference>
<dbReference type="GO" id="GO:0009088">
    <property type="term" value="P:threonine biosynthetic process"/>
    <property type="evidence" value="ECO:0007669"/>
    <property type="project" value="UniProtKB-UniRule"/>
</dbReference>
<dbReference type="FunFam" id="3.30.230.10:FF:000020">
    <property type="entry name" value="Homoserine kinase"/>
    <property type="match status" value="1"/>
</dbReference>
<dbReference type="FunFam" id="3.30.70.890:FF:000002">
    <property type="entry name" value="Homoserine kinase"/>
    <property type="match status" value="1"/>
</dbReference>
<dbReference type="Gene3D" id="3.30.230.10">
    <property type="match status" value="1"/>
</dbReference>
<dbReference type="Gene3D" id="3.30.70.890">
    <property type="entry name" value="GHMP kinase, C-terminal domain"/>
    <property type="match status" value="1"/>
</dbReference>
<dbReference type="HAMAP" id="MF_00384">
    <property type="entry name" value="Homoser_kinase"/>
    <property type="match status" value="1"/>
</dbReference>
<dbReference type="InterPro" id="IPR013750">
    <property type="entry name" value="GHMP_kinase_C_dom"/>
</dbReference>
<dbReference type="InterPro" id="IPR036554">
    <property type="entry name" value="GHMP_kinase_C_sf"/>
</dbReference>
<dbReference type="InterPro" id="IPR006204">
    <property type="entry name" value="GHMP_kinase_N_dom"/>
</dbReference>
<dbReference type="InterPro" id="IPR006203">
    <property type="entry name" value="GHMP_knse_ATP-bd_CS"/>
</dbReference>
<dbReference type="InterPro" id="IPR000870">
    <property type="entry name" value="Homoserine_kinase"/>
</dbReference>
<dbReference type="InterPro" id="IPR020568">
    <property type="entry name" value="Ribosomal_Su5_D2-typ_SF"/>
</dbReference>
<dbReference type="InterPro" id="IPR014721">
    <property type="entry name" value="Ribsml_uS5_D2-typ_fold_subgr"/>
</dbReference>
<dbReference type="NCBIfam" id="NF002288">
    <property type="entry name" value="PRK01212.1-4"/>
    <property type="match status" value="1"/>
</dbReference>
<dbReference type="NCBIfam" id="TIGR00191">
    <property type="entry name" value="thrB"/>
    <property type="match status" value="1"/>
</dbReference>
<dbReference type="PANTHER" id="PTHR20861:SF1">
    <property type="entry name" value="HOMOSERINE KINASE"/>
    <property type="match status" value="1"/>
</dbReference>
<dbReference type="PANTHER" id="PTHR20861">
    <property type="entry name" value="HOMOSERINE/4-DIPHOSPHOCYTIDYL-2-C-METHYL-D-ERYTHRITOL KINASE"/>
    <property type="match status" value="1"/>
</dbReference>
<dbReference type="Pfam" id="PF08544">
    <property type="entry name" value="GHMP_kinases_C"/>
    <property type="match status" value="1"/>
</dbReference>
<dbReference type="Pfam" id="PF00288">
    <property type="entry name" value="GHMP_kinases_N"/>
    <property type="match status" value="1"/>
</dbReference>
<dbReference type="PIRSF" id="PIRSF000676">
    <property type="entry name" value="Homoser_kin"/>
    <property type="match status" value="1"/>
</dbReference>
<dbReference type="PRINTS" id="PR00958">
    <property type="entry name" value="HOMSERKINASE"/>
</dbReference>
<dbReference type="SUPFAM" id="SSF55060">
    <property type="entry name" value="GHMP Kinase, C-terminal domain"/>
    <property type="match status" value="1"/>
</dbReference>
<dbReference type="SUPFAM" id="SSF54211">
    <property type="entry name" value="Ribosomal protein S5 domain 2-like"/>
    <property type="match status" value="1"/>
</dbReference>
<dbReference type="PROSITE" id="PS00627">
    <property type="entry name" value="GHMP_KINASES_ATP"/>
    <property type="match status" value="1"/>
</dbReference>
<organism>
    <name type="scientific">Salmonella dublin (strain CT_02021853)</name>
    <dbReference type="NCBI Taxonomy" id="439851"/>
    <lineage>
        <taxon>Bacteria</taxon>
        <taxon>Pseudomonadati</taxon>
        <taxon>Pseudomonadota</taxon>
        <taxon>Gammaproteobacteria</taxon>
        <taxon>Enterobacterales</taxon>
        <taxon>Enterobacteriaceae</taxon>
        <taxon>Salmonella</taxon>
    </lineage>
</organism>